<accession>B0R3H4</accession>
<keyword id="KW-0067">ATP-binding</keyword>
<keyword id="KW-0143">Chaperone</keyword>
<keyword id="KW-0547">Nucleotide-binding</keyword>
<reference key="1">
    <citation type="journal article" date="2008" name="Genomics">
        <title>Evolution in the laboratory: the genome of Halobacterium salinarum strain R1 compared to that of strain NRC-1.</title>
        <authorList>
            <person name="Pfeiffer F."/>
            <person name="Schuster S.C."/>
            <person name="Broicher A."/>
            <person name="Falb M."/>
            <person name="Palm P."/>
            <person name="Rodewald K."/>
            <person name="Ruepp A."/>
            <person name="Soppa J."/>
            <person name="Tittor J."/>
            <person name="Oesterhelt D."/>
        </authorList>
    </citation>
    <scope>NUCLEOTIDE SEQUENCE [LARGE SCALE GENOMIC DNA]</scope>
    <source>
        <strain>ATCC 29341 / DSM 671 / R1</strain>
    </source>
</reference>
<gene>
    <name evidence="1" type="primary">dnaK</name>
    <name type="ordered locus">OE_1737R</name>
</gene>
<evidence type="ECO:0000255" key="1">
    <source>
        <dbReference type="HAMAP-Rule" id="MF_00332"/>
    </source>
</evidence>
<evidence type="ECO:0000256" key="2">
    <source>
        <dbReference type="SAM" id="MobiDB-lite"/>
    </source>
</evidence>
<name>DNAK_HALS3</name>
<feature type="chain" id="PRO_1000119710" description="Chaperone protein DnaK">
    <location>
        <begin position="1"/>
        <end position="629"/>
    </location>
</feature>
<feature type="region of interest" description="Disordered" evidence="2">
    <location>
        <begin position="576"/>
        <end position="629"/>
    </location>
</feature>
<feature type="compositionally biased region" description="Low complexity" evidence="2">
    <location>
        <begin position="576"/>
        <end position="587"/>
    </location>
</feature>
<feature type="compositionally biased region" description="Gly residues" evidence="2">
    <location>
        <begin position="588"/>
        <end position="607"/>
    </location>
</feature>
<feature type="compositionally biased region" description="Acidic residues" evidence="2">
    <location>
        <begin position="611"/>
        <end position="629"/>
    </location>
</feature>
<organism>
    <name type="scientific">Halobacterium salinarum (strain ATCC 29341 / DSM 671 / R1)</name>
    <dbReference type="NCBI Taxonomy" id="478009"/>
    <lineage>
        <taxon>Archaea</taxon>
        <taxon>Methanobacteriati</taxon>
        <taxon>Methanobacteriota</taxon>
        <taxon>Stenosarchaea group</taxon>
        <taxon>Halobacteria</taxon>
        <taxon>Halobacteriales</taxon>
        <taxon>Halobacteriaceae</taxon>
        <taxon>Halobacterium</taxon>
        <taxon>Halobacterium salinarum NRC-34001</taxon>
    </lineage>
</organism>
<sequence length="629" mass="67397">MASEKILGVDLGTTNSAFAVMEGSDPEIITNEEGDRTTPSIVAHDDGELLVGKPAKNQAVQNPDQTIASIKRHMGEEDYTVALGDDEYTPEEISARILQKIKRDAEEYLGQDVEKAVITVPAYFNDRQRQATKDAGEIAGFDVERIVNEPTAASMAYGLDEDRDQTVLVYDLGGGTFDVSILDLGGGVYEVAATNGDNDLGGDDWDHAIIDHLADNFENEHGIDLREDRQALQRLTEAAEEAKIELSSRKETTVNLPFVTATDSGPVHLEQDITRATFESITEDLIERTVGPTEQALEDAGLSKSDIDDVILVGGSTRMPQVQAQVEDLVGQEPKKNVNPDEAVALGAAVQGGVLSGEVDDIVLVDVTPLSLGIEVKGGLFERLIEKNTAIPTTASKVFTTAADNQTSVQIRVFQGEREIASENELLGDFHLTGIPPAPAGTPQIEVTFEIDADGIVNVEAEDQGSGNAESITIEGGAGLSDEQIDEMQEDAEAHAEEDEQRRRRIEARNEAETAIQRAESLLEENEELVDEDLEADVNDAIDDVQAVLDEDEPEIDALETATEELSDTLQEIGKQAYQQQQDAQAGAAGGAGGMGGMGGMADGPGGAADADGDDEEYVDADFEDVDEE</sequence>
<proteinExistence type="inferred from homology"/>
<protein>
    <recommendedName>
        <fullName evidence="1">Chaperone protein DnaK</fullName>
    </recommendedName>
    <alternativeName>
        <fullName evidence="1">HSP70</fullName>
    </alternativeName>
    <alternativeName>
        <fullName evidence="1">Heat shock 70 kDa protein</fullName>
    </alternativeName>
    <alternativeName>
        <fullName evidence="1">Heat shock protein 70</fullName>
    </alternativeName>
</protein>
<dbReference type="EMBL" id="AM774415">
    <property type="protein sequence ID" value="CAP13288.1"/>
    <property type="molecule type" value="Genomic_DNA"/>
</dbReference>
<dbReference type="RefSeq" id="WP_010902322.1">
    <property type="nucleotide sequence ID" value="NC_010364.1"/>
</dbReference>
<dbReference type="SMR" id="B0R3H4"/>
<dbReference type="EnsemblBacteria" id="CAP13288">
    <property type="protein sequence ID" value="CAP13288"/>
    <property type="gene ID" value="OE_1737R"/>
</dbReference>
<dbReference type="GeneID" id="68693398"/>
<dbReference type="KEGG" id="hsl:OE_1737R"/>
<dbReference type="HOGENOM" id="CLU_005965_2_1_2"/>
<dbReference type="PhylomeDB" id="B0R3H4"/>
<dbReference type="Proteomes" id="UP000001321">
    <property type="component" value="Chromosome"/>
</dbReference>
<dbReference type="GO" id="GO:0005524">
    <property type="term" value="F:ATP binding"/>
    <property type="evidence" value="ECO:0007669"/>
    <property type="project" value="UniProtKB-UniRule"/>
</dbReference>
<dbReference type="GO" id="GO:0140662">
    <property type="term" value="F:ATP-dependent protein folding chaperone"/>
    <property type="evidence" value="ECO:0007669"/>
    <property type="project" value="InterPro"/>
</dbReference>
<dbReference type="GO" id="GO:0051082">
    <property type="term" value="F:unfolded protein binding"/>
    <property type="evidence" value="ECO:0007669"/>
    <property type="project" value="InterPro"/>
</dbReference>
<dbReference type="CDD" id="cd10234">
    <property type="entry name" value="ASKHA_NBD_HSP70_DnaK-like"/>
    <property type="match status" value="1"/>
</dbReference>
<dbReference type="FunFam" id="2.60.34.10:FF:000014">
    <property type="entry name" value="Chaperone protein DnaK HSP70"/>
    <property type="match status" value="1"/>
</dbReference>
<dbReference type="FunFam" id="3.30.420.40:FF:000071">
    <property type="entry name" value="Molecular chaperone DnaK"/>
    <property type="match status" value="1"/>
</dbReference>
<dbReference type="FunFam" id="3.90.640.10:FF:000003">
    <property type="entry name" value="Molecular chaperone DnaK"/>
    <property type="match status" value="1"/>
</dbReference>
<dbReference type="Gene3D" id="1.20.1270.10">
    <property type="match status" value="1"/>
</dbReference>
<dbReference type="Gene3D" id="3.30.420.40">
    <property type="match status" value="2"/>
</dbReference>
<dbReference type="Gene3D" id="3.90.640.10">
    <property type="entry name" value="Actin, Chain A, domain 4"/>
    <property type="match status" value="1"/>
</dbReference>
<dbReference type="Gene3D" id="2.60.34.10">
    <property type="entry name" value="Substrate Binding Domain Of DNAk, Chain A, domain 1"/>
    <property type="match status" value="1"/>
</dbReference>
<dbReference type="HAMAP" id="MF_00332">
    <property type="entry name" value="DnaK"/>
    <property type="match status" value="1"/>
</dbReference>
<dbReference type="InterPro" id="IPR043129">
    <property type="entry name" value="ATPase_NBD"/>
</dbReference>
<dbReference type="InterPro" id="IPR012725">
    <property type="entry name" value="Chaperone_DnaK"/>
</dbReference>
<dbReference type="InterPro" id="IPR018181">
    <property type="entry name" value="Heat_shock_70_CS"/>
</dbReference>
<dbReference type="InterPro" id="IPR029048">
    <property type="entry name" value="HSP70_C_sf"/>
</dbReference>
<dbReference type="InterPro" id="IPR029047">
    <property type="entry name" value="HSP70_peptide-bd_sf"/>
</dbReference>
<dbReference type="InterPro" id="IPR013126">
    <property type="entry name" value="Hsp_70_fam"/>
</dbReference>
<dbReference type="NCBIfam" id="NF001413">
    <property type="entry name" value="PRK00290.1"/>
    <property type="match status" value="1"/>
</dbReference>
<dbReference type="NCBIfam" id="TIGR02350">
    <property type="entry name" value="prok_dnaK"/>
    <property type="match status" value="1"/>
</dbReference>
<dbReference type="PANTHER" id="PTHR19375">
    <property type="entry name" value="HEAT SHOCK PROTEIN 70KDA"/>
    <property type="match status" value="1"/>
</dbReference>
<dbReference type="Pfam" id="PF00012">
    <property type="entry name" value="HSP70"/>
    <property type="match status" value="1"/>
</dbReference>
<dbReference type="PRINTS" id="PR00301">
    <property type="entry name" value="HEATSHOCK70"/>
</dbReference>
<dbReference type="SUPFAM" id="SSF53067">
    <property type="entry name" value="Actin-like ATPase domain"/>
    <property type="match status" value="2"/>
</dbReference>
<dbReference type="SUPFAM" id="SSF100920">
    <property type="entry name" value="Heat shock protein 70kD (HSP70), peptide-binding domain"/>
    <property type="match status" value="1"/>
</dbReference>
<dbReference type="PROSITE" id="PS00297">
    <property type="entry name" value="HSP70_1"/>
    <property type="match status" value="1"/>
</dbReference>
<dbReference type="PROSITE" id="PS00329">
    <property type="entry name" value="HSP70_2"/>
    <property type="match status" value="1"/>
</dbReference>
<dbReference type="PROSITE" id="PS01036">
    <property type="entry name" value="HSP70_3"/>
    <property type="match status" value="1"/>
</dbReference>
<comment type="function">
    <text evidence="1">Acts as a chaperone.</text>
</comment>
<comment type="similarity">
    <text evidence="1">Belongs to the heat shock protein 70 family.</text>
</comment>